<organism>
    <name type="scientific">Shewanella putrefaciens (strain CN-32 / ATCC BAA-453)</name>
    <dbReference type="NCBI Taxonomy" id="319224"/>
    <lineage>
        <taxon>Bacteria</taxon>
        <taxon>Pseudomonadati</taxon>
        <taxon>Pseudomonadota</taxon>
        <taxon>Gammaproteobacteria</taxon>
        <taxon>Alteromonadales</taxon>
        <taxon>Shewanellaceae</taxon>
        <taxon>Shewanella</taxon>
    </lineage>
</organism>
<accession>A4Y8C3</accession>
<dbReference type="EC" id="2.4.99.17" evidence="1"/>
<dbReference type="EMBL" id="CP000681">
    <property type="protein sequence ID" value="ABP76206.1"/>
    <property type="molecule type" value="Genomic_DNA"/>
</dbReference>
<dbReference type="SMR" id="A4Y8C3"/>
<dbReference type="STRING" id="319224.Sputcn32_2485"/>
<dbReference type="KEGG" id="spc:Sputcn32_2485"/>
<dbReference type="eggNOG" id="COG0809">
    <property type="taxonomic scope" value="Bacteria"/>
</dbReference>
<dbReference type="HOGENOM" id="CLU_039110_1_0_6"/>
<dbReference type="UniPathway" id="UPA00392"/>
<dbReference type="GO" id="GO:0005737">
    <property type="term" value="C:cytoplasm"/>
    <property type="evidence" value="ECO:0007669"/>
    <property type="project" value="UniProtKB-SubCell"/>
</dbReference>
<dbReference type="GO" id="GO:0051075">
    <property type="term" value="F:S-adenosylmethionine:tRNA ribosyltransferase-isomerase activity"/>
    <property type="evidence" value="ECO:0007669"/>
    <property type="project" value="UniProtKB-EC"/>
</dbReference>
<dbReference type="GO" id="GO:0008616">
    <property type="term" value="P:queuosine biosynthetic process"/>
    <property type="evidence" value="ECO:0007669"/>
    <property type="project" value="UniProtKB-UniRule"/>
</dbReference>
<dbReference type="GO" id="GO:0002099">
    <property type="term" value="P:tRNA wobble guanine modification"/>
    <property type="evidence" value="ECO:0007669"/>
    <property type="project" value="TreeGrafter"/>
</dbReference>
<dbReference type="FunFam" id="2.40.10.240:FF:000001">
    <property type="entry name" value="S-adenosylmethionine:tRNA ribosyltransferase-isomerase"/>
    <property type="match status" value="1"/>
</dbReference>
<dbReference type="FunFam" id="3.40.1780.10:FF:000001">
    <property type="entry name" value="S-adenosylmethionine:tRNA ribosyltransferase-isomerase"/>
    <property type="match status" value="1"/>
</dbReference>
<dbReference type="Gene3D" id="2.40.10.240">
    <property type="entry name" value="QueA-like"/>
    <property type="match status" value="1"/>
</dbReference>
<dbReference type="Gene3D" id="3.40.1780.10">
    <property type="entry name" value="QueA-like"/>
    <property type="match status" value="1"/>
</dbReference>
<dbReference type="HAMAP" id="MF_00113">
    <property type="entry name" value="QueA"/>
    <property type="match status" value="1"/>
</dbReference>
<dbReference type="InterPro" id="IPR003699">
    <property type="entry name" value="QueA"/>
</dbReference>
<dbReference type="InterPro" id="IPR042118">
    <property type="entry name" value="QueA_dom1"/>
</dbReference>
<dbReference type="InterPro" id="IPR042119">
    <property type="entry name" value="QueA_dom2"/>
</dbReference>
<dbReference type="InterPro" id="IPR036100">
    <property type="entry name" value="QueA_sf"/>
</dbReference>
<dbReference type="NCBIfam" id="NF001140">
    <property type="entry name" value="PRK00147.1"/>
    <property type="match status" value="1"/>
</dbReference>
<dbReference type="NCBIfam" id="TIGR00113">
    <property type="entry name" value="queA"/>
    <property type="match status" value="1"/>
</dbReference>
<dbReference type="PANTHER" id="PTHR30307">
    <property type="entry name" value="S-ADENOSYLMETHIONINE:TRNA RIBOSYLTRANSFERASE-ISOMERASE"/>
    <property type="match status" value="1"/>
</dbReference>
<dbReference type="PANTHER" id="PTHR30307:SF0">
    <property type="entry name" value="S-ADENOSYLMETHIONINE:TRNA RIBOSYLTRANSFERASE-ISOMERASE"/>
    <property type="match status" value="1"/>
</dbReference>
<dbReference type="Pfam" id="PF02547">
    <property type="entry name" value="Queuosine_synth"/>
    <property type="match status" value="1"/>
</dbReference>
<dbReference type="SUPFAM" id="SSF111337">
    <property type="entry name" value="QueA-like"/>
    <property type="match status" value="1"/>
</dbReference>
<name>QUEA_SHEPC</name>
<comment type="function">
    <text evidence="1">Transfers and isomerizes the ribose moiety from AdoMet to the 7-aminomethyl group of 7-deazaguanine (preQ1-tRNA) to give epoxyqueuosine (oQ-tRNA).</text>
</comment>
<comment type="catalytic activity">
    <reaction evidence="1">
        <text>7-aminomethyl-7-carbaguanosine(34) in tRNA + S-adenosyl-L-methionine = epoxyqueuosine(34) in tRNA + adenine + L-methionine + 2 H(+)</text>
        <dbReference type="Rhea" id="RHEA:32155"/>
        <dbReference type="Rhea" id="RHEA-COMP:10342"/>
        <dbReference type="Rhea" id="RHEA-COMP:18582"/>
        <dbReference type="ChEBI" id="CHEBI:15378"/>
        <dbReference type="ChEBI" id="CHEBI:16708"/>
        <dbReference type="ChEBI" id="CHEBI:57844"/>
        <dbReference type="ChEBI" id="CHEBI:59789"/>
        <dbReference type="ChEBI" id="CHEBI:82833"/>
        <dbReference type="ChEBI" id="CHEBI:194443"/>
        <dbReference type="EC" id="2.4.99.17"/>
    </reaction>
</comment>
<comment type="pathway">
    <text evidence="1">tRNA modification; tRNA-queuosine biosynthesis.</text>
</comment>
<comment type="subunit">
    <text evidence="1">Monomer.</text>
</comment>
<comment type="subcellular location">
    <subcellularLocation>
        <location evidence="1">Cytoplasm</location>
    </subcellularLocation>
</comment>
<comment type="similarity">
    <text evidence="1">Belongs to the QueA family.</text>
</comment>
<keyword id="KW-0963">Cytoplasm</keyword>
<keyword id="KW-0671">Queuosine biosynthesis</keyword>
<keyword id="KW-0949">S-adenosyl-L-methionine</keyword>
<keyword id="KW-0808">Transferase</keyword>
<gene>
    <name evidence="1" type="primary">queA</name>
    <name type="ordered locus">Sputcn32_2485</name>
</gene>
<reference key="1">
    <citation type="submission" date="2007-04" db="EMBL/GenBank/DDBJ databases">
        <title>Complete sequence of Shewanella putrefaciens CN-32.</title>
        <authorList>
            <consortium name="US DOE Joint Genome Institute"/>
            <person name="Copeland A."/>
            <person name="Lucas S."/>
            <person name="Lapidus A."/>
            <person name="Barry K."/>
            <person name="Detter J.C."/>
            <person name="Glavina del Rio T."/>
            <person name="Hammon N."/>
            <person name="Israni S."/>
            <person name="Dalin E."/>
            <person name="Tice H."/>
            <person name="Pitluck S."/>
            <person name="Chain P."/>
            <person name="Malfatti S."/>
            <person name="Shin M."/>
            <person name="Vergez L."/>
            <person name="Schmutz J."/>
            <person name="Larimer F."/>
            <person name="Land M."/>
            <person name="Hauser L."/>
            <person name="Kyrpides N."/>
            <person name="Mikhailova N."/>
            <person name="Romine M.F."/>
            <person name="Fredrickson J."/>
            <person name="Tiedje J."/>
            <person name="Richardson P."/>
        </authorList>
    </citation>
    <scope>NUCLEOTIDE SEQUENCE [LARGE SCALE GENOMIC DNA]</scope>
    <source>
        <strain>CN-32 / ATCC BAA-453</strain>
    </source>
</reference>
<evidence type="ECO:0000255" key="1">
    <source>
        <dbReference type="HAMAP-Rule" id="MF_00113"/>
    </source>
</evidence>
<sequence>MRVADFSFDLPDELIARYPMAQRNASRLLTLDGNSGALGDKQFTELLEMINPGDLMVFNNTRVIPARMFGQKASGGKLEILVERMLDDKRILAHVRSSKSPKVDSLIHLDGGYQMKMVARHDTLFELELLSELTILEVLEAVGHMPLPPYIDRPDEDADKERYQTVYNQNPGAVAAPTAGLHFDDAMLDALKAKGVNIAFVTLHVGAGTFQPVRVDNVLEHKMHSEWANVPQDVVDLIAQTKAAGKRVVAVGTTSVRSLESAARASLGELKAFSGDTDIFIYPGYQFQVVDAMVTNFHLPESTLIMLVSAFAGFDHVMAAYQHAITQKYRFFSYGDAMFVTKKAH</sequence>
<feature type="chain" id="PRO_1000015273" description="S-adenosylmethionine:tRNA ribosyltransferase-isomerase">
    <location>
        <begin position="1"/>
        <end position="345"/>
    </location>
</feature>
<proteinExistence type="inferred from homology"/>
<protein>
    <recommendedName>
        <fullName evidence="1">S-adenosylmethionine:tRNA ribosyltransferase-isomerase</fullName>
        <ecNumber evidence="1">2.4.99.17</ecNumber>
    </recommendedName>
    <alternativeName>
        <fullName evidence="1">Queuosine biosynthesis protein QueA</fullName>
    </alternativeName>
</protein>